<protein>
    <recommendedName>
        <fullName evidence="1">Chaperone protein DnaK</fullName>
    </recommendedName>
    <alternativeName>
        <fullName evidence="1">HSP70</fullName>
    </alternativeName>
    <alternativeName>
        <fullName evidence="1">Heat shock 70 kDa protein</fullName>
    </alternativeName>
    <alternativeName>
        <fullName evidence="1">Heat shock protein 70</fullName>
    </alternativeName>
</protein>
<organism>
    <name type="scientific">Mycobacteroides abscessus (strain ATCC 19977 / DSM 44196 / CCUG 20993 / CIP 104536 / JCM 13569 / NCTC 13031 / TMC 1543 / L948)</name>
    <name type="common">Mycobacterium abscessus</name>
    <dbReference type="NCBI Taxonomy" id="561007"/>
    <lineage>
        <taxon>Bacteria</taxon>
        <taxon>Bacillati</taxon>
        <taxon>Actinomycetota</taxon>
        <taxon>Actinomycetes</taxon>
        <taxon>Mycobacteriales</taxon>
        <taxon>Mycobacteriaceae</taxon>
        <taxon>Mycobacteroides</taxon>
        <taxon>Mycobacteroides abscessus</taxon>
    </lineage>
</organism>
<keyword id="KW-0067">ATP-binding</keyword>
<keyword id="KW-0143">Chaperone</keyword>
<keyword id="KW-0547">Nucleotide-binding</keyword>
<keyword id="KW-0597">Phosphoprotein</keyword>
<keyword id="KW-1185">Reference proteome</keyword>
<keyword id="KW-0346">Stress response</keyword>
<proteinExistence type="inferred from homology"/>
<dbReference type="EMBL" id="CU458896">
    <property type="protein sequence ID" value="CAM64346.1"/>
    <property type="molecule type" value="Genomic_DNA"/>
</dbReference>
<dbReference type="RefSeq" id="WP_005065061.1">
    <property type="nucleotide sequence ID" value="NZ_MLCG01000001.1"/>
</dbReference>
<dbReference type="SMR" id="B1MIX5"/>
<dbReference type="GeneID" id="93381219"/>
<dbReference type="KEGG" id="mab:MAB_4273c"/>
<dbReference type="Proteomes" id="UP000007137">
    <property type="component" value="Chromosome"/>
</dbReference>
<dbReference type="GO" id="GO:0005524">
    <property type="term" value="F:ATP binding"/>
    <property type="evidence" value="ECO:0007669"/>
    <property type="project" value="UniProtKB-UniRule"/>
</dbReference>
<dbReference type="GO" id="GO:0140662">
    <property type="term" value="F:ATP-dependent protein folding chaperone"/>
    <property type="evidence" value="ECO:0007669"/>
    <property type="project" value="InterPro"/>
</dbReference>
<dbReference type="GO" id="GO:0051082">
    <property type="term" value="F:unfolded protein binding"/>
    <property type="evidence" value="ECO:0007669"/>
    <property type="project" value="InterPro"/>
</dbReference>
<dbReference type="CDD" id="cd10234">
    <property type="entry name" value="ASKHA_NBD_HSP70_DnaK-like"/>
    <property type="match status" value="1"/>
</dbReference>
<dbReference type="FunFam" id="2.60.34.10:FF:000014">
    <property type="entry name" value="Chaperone protein DnaK HSP70"/>
    <property type="match status" value="1"/>
</dbReference>
<dbReference type="FunFam" id="1.20.1270.10:FF:000001">
    <property type="entry name" value="Molecular chaperone DnaK"/>
    <property type="match status" value="1"/>
</dbReference>
<dbReference type="FunFam" id="3.30.420.40:FF:000071">
    <property type="entry name" value="Molecular chaperone DnaK"/>
    <property type="match status" value="1"/>
</dbReference>
<dbReference type="FunFam" id="3.90.640.10:FF:000003">
    <property type="entry name" value="Molecular chaperone DnaK"/>
    <property type="match status" value="1"/>
</dbReference>
<dbReference type="Gene3D" id="1.20.1270.10">
    <property type="match status" value="1"/>
</dbReference>
<dbReference type="Gene3D" id="3.30.30.30">
    <property type="match status" value="1"/>
</dbReference>
<dbReference type="Gene3D" id="3.30.420.40">
    <property type="match status" value="3"/>
</dbReference>
<dbReference type="Gene3D" id="3.90.640.10">
    <property type="entry name" value="Actin, Chain A, domain 4"/>
    <property type="match status" value="1"/>
</dbReference>
<dbReference type="Gene3D" id="2.60.34.10">
    <property type="entry name" value="Substrate Binding Domain Of DNAk, Chain A, domain 1"/>
    <property type="match status" value="1"/>
</dbReference>
<dbReference type="HAMAP" id="MF_00332">
    <property type="entry name" value="DnaK"/>
    <property type="match status" value="1"/>
</dbReference>
<dbReference type="InterPro" id="IPR043129">
    <property type="entry name" value="ATPase_NBD"/>
</dbReference>
<dbReference type="InterPro" id="IPR012725">
    <property type="entry name" value="Chaperone_DnaK"/>
</dbReference>
<dbReference type="InterPro" id="IPR018181">
    <property type="entry name" value="Heat_shock_70_CS"/>
</dbReference>
<dbReference type="InterPro" id="IPR029048">
    <property type="entry name" value="HSP70_C_sf"/>
</dbReference>
<dbReference type="InterPro" id="IPR029047">
    <property type="entry name" value="HSP70_peptide-bd_sf"/>
</dbReference>
<dbReference type="InterPro" id="IPR013126">
    <property type="entry name" value="Hsp_70_fam"/>
</dbReference>
<dbReference type="NCBIfam" id="NF001413">
    <property type="entry name" value="PRK00290.1"/>
    <property type="match status" value="1"/>
</dbReference>
<dbReference type="NCBIfam" id="TIGR02350">
    <property type="entry name" value="prok_dnaK"/>
    <property type="match status" value="1"/>
</dbReference>
<dbReference type="PANTHER" id="PTHR19375">
    <property type="entry name" value="HEAT SHOCK PROTEIN 70KDA"/>
    <property type="match status" value="1"/>
</dbReference>
<dbReference type="Pfam" id="PF00012">
    <property type="entry name" value="HSP70"/>
    <property type="match status" value="1"/>
</dbReference>
<dbReference type="PRINTS" id="PR00301">
    <property type="entry name" value="HEATSHOCK70"/>
</dbReference>
<dbReference type="SUPFAM" id="SSF53067">
    <property type="entry name" value="Actin-like ATPase domain"/>
    <property type="match status" value="2"/>
</dbReference>
<dbReference type="SUPFAM" id="SSF100934">
    <property type="entry name" value="Heat shock protein 70kD (HSP70), C-terminal subdomain"/>
    <property type="match status" value="1"/>
</dbReference>
<dbReference type="SUPFAM" id="SSF100920">
    <property type="entry name" value="Heat shock protein 70kD (HSP70), peptide-binding domain"/>
    <property type="match status" value="1"/>
</dbReference>
<dbReference type="PROSITE" id="PS00297">
    <property type="entry name" value="HSP70_1"/>
    <property type="match status" value="1"/>
</dbReference>
<dbReference type="PROSITE" id="PS00329">
    <property type="entry name" value="HSP70_2"/>
    <property type="match status" value="1"/>
</dbReference>
<dbReference type="PROSITE" id="PS01036">
    <property type="entry name" value="HSP70_3"/>
    <property type="match status" value="1"/>
</dbReference>
<name>DNAK_MYCA9</name>
<comment type="function">
    <text evidence="1">Acts as a chaperone.</text>
</comment>
<comment type="induction">
    <text evidence="1">By stress conditions e.g. heat shock.</text>
</comment>
<comment type="similarity">
    <text evidence="1">Belongs to the heat shock protein 70 family.</text>
</comment>
<accession>B1MIX5</accession>
<sequence length="620" mass="66470">MARAVGIDLGTTNSVVAVLEGGDPVVVANSEGSRTTPSVVAFARNGEVLVGQPAKNQAVTNVDRTIRSVKRHMGTDWTVEIDGKNYTPQEISARTLQKLKRDAEAYLGEDITDAVITVPAYFNDAQRQATKEAGQIAGLNVLRIVNEPTAAALAYGLDKGEKEQTILVFDLGGGTFDVSLLEIGDGVVEVRATSGDNHLGGDDWDERIVTWLVDKFKASAGIDLTKDKMAMQRLREAAEKAKIELSSSQSTSINLPYITVDADKNPLFLDEQLTRAEFQKITQDLLDRTRKPFQSVIKDAGVSVSDIDHVVLVGGSTRMPAVTDLVKELTGGKEPNKGVNPDEVVAVGAALQAGVLKGEVKDVLLLDVTPLSLGIETKGGVMTKLIERNTTIPTKRSETFTTADDNQPSVQIQVYQGEREIASHNKLLGSFELTGIPPAPRGVPQIEVTFDIDANGIVHVTAKDKGTGKENTIKIQEGSGLSKEEIDRMIKDAEAHADEDKKRREEADVRNQAESLVYQTEKFVKEQREPAEGSEKVVSDETLSKVDEAISEAKKALEGTDIGAIKAAMEKLGEQSQALGQAIYEAAAAKAQADGAEGGAGSADSDVVDAEVVDEEKDSK</sequence>
<evidence type="ECO:0000255" key="1">
    <source>
        <dbReference type="HAMAP-Rule" id="MF_00332"/>
    </source>
</evidence>
<evidence type="ECO:0000256" key="2">
    <source>
        <dbReference type="SAM" id="MobiDB-lite"/>
    </source>
</evidence>
<gene>
    <name evidence="1" type="primary">dnaK</name>
    <name type="ordered locus">MAB_4273c</name>
</gene>
<feature type="chain" id="PRO_1000119732" description="Chaperone protein DnaK">
    <location>
        <begin position="1"/>
        <end position="620"/>
    </location>
</feature>
<feature type="region of interest" description="Disordered" evidence="2">
    <location>
        <begin position="591"/>
        <end position="620"/>
    </location>
</feature>
<feature type="compositionally biased region" description="Acidic residues" evidence="2">
    <location>
        <begin position="606"/>
        <end position="620"/>
    </location>
</feature>
<feature type="modified residue" description="Phosphothreonine; by autocatalysis" evidence="1">
    <location>
        <position position="175"/>
    </location>
</feature>
<reference key="1">
    <citation type="journal article" date="2009" name="PLoS ONE">
        <title>Non mycobacterial virulence genes in the genome of the emerging pathogen Mycobacterium abscessus.</title>
        <authorList>
            <person name="Ripoll F."/>
            <person name="Pasek S."/>
            <person name="Schenowitz C."/>
            <person name="Dossat C."/>
            <person name="Barbe V."/>
            <person name="Rottman M."/>
            <person name="Macheras E."/>
            <person name="Heym B."/>
            <person name="Herrmann J.L."/>
            <person name="Daffe M."/>
            <person name="Brosch R."/>
            <person name="Risler J.L."/>
            <person name="Gaillard J.L."/>
        </authorList>
    </citation>
    <scope>NUCLEOTIDE SEQUENCE [LARGE SCALE GENOMIC DNA]</scope>
    <source>
        <strain>ATCC 19977 / DSM 44196 / CCUG 20993 / CIP 104536 / JCM 13569 / NCTC 13031 / TMC 1543 / L948</strain>
    </source>
</reference>